<sequence>MIRELCRGFGRYRRYLGRLRQNLRETQKFFRDIKCSHNHTCPSSPTSGGGAERGPAGDVAETGLQAGQLSCISFPPKEEKYLQQIVDCLPCILILGQDCNVKCQLLNLLLGVQVLPTTKLGSEESCKLRRLRFTYGTQTRVSLALPGQYELVHTLVAHQGNWETIPEEDLEVQENNEDAAHVLAELEVTMHHALLQEVDVVVAPCQGLRPTVDVLGDLVNDFLPVITYALHKDELSERDEQELQEIRKYFSFPVFFFKVPKLGSEITDSSTRRTESERSLLYRQLIDLGYLSSSHWNCGTPGQDTKAQSVLVEQSEKLRHLSTFSHQVLQTRLVDAAKALNLVHCHCLDIFINQAFDMQRDLQITPKRLEYTRKKENELYESLMNIANRKQEEMKDMIVETLNTMKEELLDDAANMEFKDVIVPENGEPVGTREIKCCIRQIQELIISRLNQAVANKLISSVDYLRESFVGTLERCLQSLEKSQDVSVHITSNYLKQILNAAYHVEVTFHSGSSVTRMLWEQIKQIIQRITWVSPPAITLEWKRKVAQEAIESLSASKLAKSICSQFRTRLNSSHEAFAASLRQLEAGHSGRLEKTEDLWLKVRKDHAPRLARLSLESRSLQDVLLHRKPKLGQELGRGQYGVVYLCDNWGGHFPCALKSVVPPDEKHWNDLALEFHYMRSLPKHERLVDLHGSVIDYNYGGGSSIAVLLIMERLHRDLYTGLKAGLTLETRLQIALDVVEGIRFLHSQGLVHRDIKLKNVLLDKQNRAKITDLGFCKPEAMMSGSIVGTPIHMAPELFTGKYDNSVDVYAFGILFWYICSGSVKLPEAFERCASKDHLWNNVRRGARPERLPVFDEECWQLMEACWDGDPLKRPLLGIVQPMLQGIMDRLCKSNSEQPNRGLDDST</sequence>
<comment type="function">
    <text evidence="3">Acts as a positive regulator of ERK phosphorylation downstream of fibroblast growth factor-receptor activation. Involved in the regulation of both caspase-dependent apoptosis and caspase-independent cell death. In the skin, it plays a predominant role in suppressing caspase-dependent apoptosis in response to UV stress in a range of dermal cell types.</text>
</comment>
<comment type="catalytic activity">
    <reaction evidence="1">
        <text>L-seryl-[protein] + ATP = O-phospho-L-seryl-[protein] + ADP + H(+)</text>
        <dbReference type="Rhea" id="RHEA:17989"/>
        <dbReference type="Rhea" id="RHEA-COMP:9863"/>
        <dbReference type="Rhea" id="RHEA-COMP:11604"/>
        <dbReference type="ChEBI" id="CHEBI:15378"/>
        <dbReference type="ChEBI" id="CHEBI:29999"/>
        <dbReference type="ChEBI" id="CHEBI:30616"/>
        <dbReference type="ChEBI" id="CHEBI:83421"/>
        <dbReference type="ChEBI" id="CHEBI:456216"/>
        <dbReference type="EC" id="2.7.12.1"/>
    </reaction>
</comment>
<comment type="catalytic activity">
    <reaction evidence="1">
        <text>L-threonyl-[protein] + ATP = O-phospho-L-threonyl-[protein] + ADP + H(+)</text>
        <dbReference type="Rhea" id="RHEA:46608"/>
        <dbReference type="Rhea" id="RHEA-COMP:11060"/>
        <dbReference type="Rhea" id="RHEA-COMP:11605"/>
        <dbReference type="ChEBI" id="CHEBI:15378"/>
        <dbReference type="ChEBI" id="CHEBI:30013"/>
        <dbReference type="ChEBI" id="CHEBI:30616"/>
        <dbReference type="ChEBI" id="CHEBI:61977"/>
        <dbReference type="ChEBI" id="CHEBI:456216"/>
        <dbReference type="EC" id="2.7.12.1"/>
    </reaction>
</comment>
<comment type="catalytic activity">
    <reaction evidence="1">
        <text>L-tyrosyl-[protein] + ATP = O-phospho-L-tyrosyl-[protein] + ADP + H(+)</text>
        <dbReference type="Rhea" id="RHEA:10596"/>
        <dbReference type="Rhea" id="RHEA-COMP:10136"/>
        <dbReference type="Rhea" id="RHEA-COMP:20101"/>
        <dbReference type="ChEBI" id="CHEBI:15378"/>
        <dbReference type="ChEBI" id="CHEBI:30616"/>
        <dbReference type="ChEBI" id="CHEBI:46858"/>
        <dbReference type="ChEBI" id="CHEBI:61978"/>
        <dbReference type="ChEBI" id="CHEBI:456216"/>
        <dbReference type="EC" id="2.7.12.1"/>
    </reaction>
</comment>
<comment type="subcellular location">
    <subcellularLocation>
        <location evidence="2">Cytoplasm</location>
    </subcellularLocation>
    <subcellularLocation>
        <location evidence="2">Cell membrane</location>
    </subcellularLocation>
    <subcellularLocation>
        <location evidence="2">Apical cell membrane</location>
    </subcellularLocation>
    <subcellularLocation>
        <location evidence="2">Basolateral cell membrane</location>
    </subcellularLocation>
    <subcellularLocation>
        <location evidence="2">Cell junction</location>
    </subcellularLocation>
    <text evidence="2">Detected in basolateral and apical membranes of all tubular epithelia. Detected at apical cell-cell junctions. Colocalized with FGF receptors to the cell membrane.</text>
</comment>
<comment type="similarity">
    <text evidence="5">Belongs to the protein kinase superfamily. Ser/Thr protein kinase family.</text>
</comment>
<reference evidence="8" key="1">
    <citation type="journal article" date="2006" name="Biochim. Biophys. Acta">
        <title>Dusty protein kinases: primary structure, gene evolution, tissue specific expression and unique features of the catalytic domain.</title>
        <authorList>
            <person name="Peng J."/>
            <person name="Dong W."/>
            <person name="Chen Y."/>
            <person name="Mo R."/>
            <person name="Cheng J.-F."/>
            <person name="Hui C.-C."/>
            <person name="Mohandas N."/>
            <person name="Huang C.-H."/>
        </authorList>
    </citation>
    <scope>NUCLEOTIDE SEQUENCE [MRNA]</scope>
</reference>
<accession>Q20CR4</accession>
<keyword id="KW-0067">ATP-binding</keyword>
<keyword id="KW-0965">Cell junction</keyword>
<keyword id="KW-1003">Cell membrane</keyword>
<keyword id="KW-0175">Coiled coil</keyword>
<keyword id="KW-0963">Cytoplasm</keyword>
<keyword id="KW-0418">Kinase</keyword>
<keyword id="KW-0472">Membrane</keyword>
<keyword id="KW-0547">Nucleotide-binding</keyword>
<keyword id="KW-1185">Reference proteome</keyword>
<keyword id="KW-0723">Serine/threonine-protein kinase</keyword>
<keyword id="KW-0808">Transferase</keyword>
<keyword id="KW-0829">Tyrosine-protein kinase</keyword>
<organism>
    <name type="scientific">Macaca mulatta</name>
    <name type="common">Rhesus macaque</name>
    <dbReference type="NCBI Taxonomy" id="9544"/>
    <lineage>
        <taxon>Eukaryota</taxon>
        <taxon>Metazoa</taxon>
        <taxon>Chordata</taxon>
        <taxon>Craniata</taxon>
        <taxon>Vertebrata</taxon>
        <taxon>Euteleostomi</taxon>
        <taxon>Mammalia</taxon>
        <taxon>Eutheria</taxon>
        <taxon>Euarchontoglires</taxon>
        <taxon>Primates</taxon>
        <taxon>Haplorrhini</taxon>
        <taxon>Catarrhini</taxon>
        <taxon>Cercopithecidae</taxon>
        <taxon>Cercopithecinae</taxon>
        <taxon>Macaca</taxon>
    </lineage>
</organism>
<dbReference type="EC" id="2.7.12.1" evidence="1"/>
<dbReference type="EMBL" id="DQ341264">
    <property type="protein sequence ID" value="ABD72471.1"/>
    <property type="molecule type" value="mRNA"/>
</dbReference>
<dbReference type="RefSeq" id="NP_001035038.1">
    <property type="nucleotide sequence ID" value="NM_001039949.1"/>
</dbReference>
<dbReference type="SMR" id="Q20CR4"/>
<dbReference type="STRING" id="9544.ENSMMUP00000066755"/>
<dbReference type="PaxDb" id="9544-ENSMMUP00000013732"/>
<dbReference type="GeneID" id="664732"/>
<dbReference type="KEGG" id="mcc:664732"/>
<dbReference type="CTD" id="25778"/>
<dbReference type="eggNOG" id="KOG0192">
    <property type="taxonomic scope" value="Eukaryota"/>
</dbReference>
<dbReference type="HOGENOM" id="CLU_014116_0_0_1"/>
<dbReference type="InParanoid" id="Q20CR4"/>
<dbReference type="OrthoDB" id="122279at2759"/>
<dbReference type="Proteomes" id="UP000006718">
    <property type="component" value="Unassembled WGS sequence"/>
</dbReference>
<dbReference type="GO" id="GO:0070161">
    <property type="term" value="C:anchoring junction"/>
    <property type="evidence" value="ECO:0007669"/>
    <property type="project" value="UniProtKB-SubCell"/>
</dbReference>
<dbReference type="GO" id="GO:0016324">
    <property type="term" value="C:apical plasma membrane"/>
    <property type="evidence" value="ECO:0000250"/>
    <property type="project" value="UniProtKB"/>
</dbReference>
<dbReference type="GO" id="GO:0016323">
    <property type="term" value="C:basolateral plasma membrane"/>
    <property type="evidence" value="ECO:0000250"/>
    <property type="project" value="UniProtKB"/>
</dbReference>
<dbReference type="GO" id="GO:0005737">
    <property type="term" value="C:cytoplasm"/>
    <property type="evidence" value="ECO:0000250"/>
    <property type="project" value="UniProtKB"/>
</dbReference>
<dbReference type="GO" id="GO:0005524">
    <property type="term" value="F:ATP binding"/>
    <property type="evidence" value="ECO:0007669"/>
    <property type="project" value="UniProtKB-KW"/>
</dbReference>
<dbReference type="GO" id="GO:0106310">
    <property type="term" value="F:protein serine kinase activity"/>
    <property type="evidence" value="ECO:0007669"/>
    <property type="project" value="RHEA"/>
</dbReference>
<dbReference type="GO" id="GO:0004674">
    <property type="term" value="F:protein serine/threonine kinase activity"/>
    <property type="evidence" value="ECO:0007669"/>
    <property type="project" value="UniProtKB-KW"/>
</dbReference>
<dbReference type="GO" id="GO:0004712">
    <property type="term" value="F:protein serine/threonine/tyrosine kinase activity"/>
    <property type="evidence" value="ECO:0007669"/>
    <property type="project" value="UniProtKB-EC"/>
</dbReference>
<dbReference type="GO" id="GO:0004713">
    <property type="term" value="F:protein tyrosine kinase activity"/>
    <property type="evidence" value="ECO:0007669"/>
    <property type="project" value="UniProtKB-KW"/>
</dbReference>
<dbReference type="GO" id="GO:0044344">
    <property type="term" value="P:cellular response to fibroblast growth factor stimulus"/>
    <property type="evidence" value="ECO:0000250"/>
    <property type="project" value="UniProtKB"/>
</dbReference>
<dbReference type="GO" id="GO:0043066">
    <property type="term" value="P:negative regulation of apoptotic process"/>
    <property type="evidence" value="ECO:0000250"/>
    <property type="project" value="UniProtKB"/>
</dbReference>
<dbReference type="GO" id="GO:0070374">
    <property type="term" value="P:positive regulation of ERK1 and ERK2 cascade"/>
    <property type="evidence" value="ECO:0000250"/>
    <property type="project" value="UniProtKB"/>
</dbReference>
<dbReference type="GO" id="GO:0045743">
    <property type="term" value="P:positive regulation of fibroblast growth factor receptor signaling pathway"/>
    <property type="evidence" value="ECO:0000250"/>
    <property type="project" value="UniProtKB"/>
</dbReference>
<dbReference type="GO" id="GO:0033674">
    <property type="term" value="P:positive regulation of kinase activity"/>
    <property type="evidence" value="ECO:0000250"/>
    <property type="project" value="UniProtKB"/>
</dbReference>
<dbReference type="CDD" id="cd13975">
    <property type="entry name" value="PKc_Dusty"/>
    <property type="match status" value="1"/>
</dbReference>
<dbReference type="FunFam" id="1.10.510.10:FF:000244">
    <property type="entry name" value="Dual serine/threonine and tyrosine protein kinase"/>
    <property type="match status" value="1"/>
</dbReference>
<dbReference type="Gene3D" id="1.10.510.10">
    <property type="entry name" value="Transferase(Phosphotransferase) domain 1"/>
    <property type="match status" value="1"/>
</dbReference>
<dbReference type="InterPro" id="IPR051302">
    <property type="entry name" value="Dual_SerThr-Tyr_Kinase"/>
</dbReference>
<dbReference type="InterPro" id="IPR011009">
    <property type="entry name" value="Kinase-like_dom_sf"/>
</dbReference>
<dbReference type="InterPro" id="IPR000719">
    <property type="entry name" value="Prot_kinase_dom"/>
</dbReference>
<dbReference type="InterPro" id="IPR017441">
    <property type="entry name" value="Protein_kinase_ATP_BS"/>
</dbReference>
<dbReference type="InterPro" id="IPR008271">
    <property type="entry name" value="Ser/Thr_kinase_AS"/>
</dbReference>
<dbReference type="PANTHER" id="PTHR46392">
    <property type="entry name" value="DUAL SERINE/THREONINE AND TYROSINE PROTEIN KINASE"/>
    <property type="match status" value="1"/>
</dbReference>
<dbReference type="PANTHER" id="PTHR46392:SF1">
    <property type="entry name" value="DUAL SERINE_THREONINE AND TYROSINE PROTEIN KINASE"/>
    <property type="match status" value="1"/>
</dbReference>
<dbReference type="Pfam" id="PF00069">
    <property type="entry name" value="Pkinase"/>
    <property type="match status" value="1"/>
</dbReference>
<dbReference type="SMART" id="SM00220">
    <property type="entry name" value="S_TKc"/>
    <property type="match status" value="1"/>
</dbReference>
<dbReference type="SUPFAM" id="SSF56112">
    <property type="entry name" value="Protein kinase-like (PK-like)"/>
    <property type="match status" value="1"/>
</dbReference>
<dbReference type="PROSITE" id="PS00107">
    <property type="entry name" value="PROTEIN_KINASE_ATP"/>
    <property type="match status" value="1"/>
</dbReference>
<dbReference type="PROSITE" id="PS50011">
    <property type="entry name" value="PROTEIN_KINASE_DOM"/>
    <property type="match status" value="1"/>
</dbReference>
<dbReference type="PROSITE" id="PS00108">
    <property type="entry name" value="PROTEIN_KINASE_ST"/>
    <property type="match status" value="1"/>
</dbReference>
<protein>
    <recommendedName>
        <fullName evidence="7">Dual serine/threonine and tyrosine protein kinase</fullName>
        <ecNumber evidence="1">2.7.12.1</ecNumber>
    </recommendedName>
    <alternativeName>
        <fullName evidence="7 8">Dusty protein kinase</fullName>
        <shortName evidence="7">Dusty PK</shortName>
    </alternativeName>
    <alternativeName>
        <fullName evidence="3">Receptor-interacting serine/threonine-protein kinase 5</fullName>
    </alternativeName>
</protein>
<feature type="chain" id="PRO_0000374056" description="Dual serine/threonine and tyrosine protein kinase">
    <location>
        <begin position="1"/>
        <end position="907"/>
    </location>
</feature>
<feature type="domain" description="Protein kinase" evidence="5">
    <location>
        <begin position="630"/>
        <end position="884"/>
    </location>
</feature>
<feature type="coiled-coil region" evidence="4">
    <location>
        <begin position="373"/>
        <end position="409"/>
    </location>
</feature>
<feature type="active site" description="Proton acceptor" evidence="3 5 6">
    <location>
        <position position="755"/>
    </location>
</feature>
<feature type="binding site" evidence="3 5">
    <location>
        <begin position="636"/>
        <end position="644"/>
    </location>
    <ligand>
        <name>ATP</name>
        <dbReference type="ChEBI" id="CHEBI:30616"/>
    </ligand>
</feature>
<feature type="binding site" evidence="3 5">
    <location>
        <position position="659"/>
    </location>
    <ligand>
        <name>ATP</name>
        <dbReference type="ChEBI" id="CHEBI:30616"/>
    </ligand>
</feature>
<evidence type="ECO:0000250" key="1">
    <source>
        <dbReference type="UniProtKB" id="P16879"/>
    </source>
</evidence>
<evidence type="ECO:0000250" key="2">
    <source>
        <dbReference type="UniProtKB" id="Q6XUX1"/>
    </source>
</evidence>
<evidence type="ECO:0000250" key="3">
    <source>
        <dbReference type="UniProtKB" id="Q6XUX3"/>
    </source>
</evidence>
<evidence type="ECO:0000255" key="4"/>
<evidence type="ECO:0000255" key="5">
    <source>
        <dbReference type="PROSITE-ProRule" id="PRU00159"/>
    </source>
</evidence>
<evidence type="ECO:0000255" key="6">
    <source>
        <dbReference type="PROSITE-ProRule" id="PRU10027"/>
    </source>
</evidence>
<evidence type="ECO:0000303" key="7">
    <source>
    </source>
</evidence>
<evidence type="ECO:0000312" key="8">
    <source>
        <dbReference type="EMBL" id="ABD72471.1"/>
    </source>
</evidence>
<proteinExistence type="evidence at transcript level"/>
<gene>
    <name evidence="3" type="primary">DSTYK</name>
    <name evidence="3" type="synonym">RIPK5</name>
</gene>
<name>DUSTY_MACMU</name>